<sequence length="399" mass="42462">MERAGARGQRCGRRSHGLPLALRLALLLAGSPSGRAGAPEEQEIAGSGTVAPAGGDRCRGYYDVMGQWDPPFNCSSGVYSFCCGTCGYRFCCHDGPRRLDQSRCSNYDTPAWVQTGRPPARARDTAAPRDPARERSHTAVYAVCGVAALLVLVGIGARLGLERAHSPRARRTVTRTLTELLKQPGPQEPLPPPLGPPLGNCVQVQMGDGVLRGSPHNSTDKKRLNNAPLGSATPGPPRGPRLQGGGSLTLQPDYAKFATLKAAALKATEVAPQDFYQRFPSTETGPRTLPARVPRPPEDLPALLDACPWAPPGYVPPAGPVSSVPYAAWTAGRPARPLPRSHLVAQVSPAPRRPNHAPRRQFSVEKLPEAFSAQQASFYSSAGRGPRHLSTNSKAEVTV</sequence>
<gene>
    <name evidence="4 7" type="primary">Shisa8</name>
</gene>
<organism>
    <name type="scientific">Mus musculus</name>
    <name type="common">Mouse</name>
    <dbReference type="NCBI Taxonomy" id="10090"/>
    <lineage>
        <taxon>Eukaryota</taxon>
        <taxon>Metazoa</taxon>
        <taxon>Chordata</taxon>
        <taxon>Craniata</taxon>
        <taxon>Vertebrata</taxon>
        <taxon>Euteleostomi</taxon>
        <taxon>Mammalia</taxon>
        <taxon>Eutheria</taxon>
        <taxon>Euarchontoglires</taxon>
        <taxon>Glires</taxon>
        <taxon>Rodentia</taxon>
        <taxon>Myomorpha</taxon>
        <taxon>Muroidea</taxon>
        <taxon>Muridae</taxon>
        <taxon>Murinae</taxon>
        <taxon>Mus</taxon>
        <taxon>Mus</taxon>
    </lineage>
</organism>
<protein>
    <recommendedName>
        <fullName evidence="5">Protein shisa-8</fullName>
    </recommendedName>
    <alternativeName>
        <fullName evidence="4">Cystine-knot AMPAR modulating protein of 39 kDa</fullName>
        <shortName evidence="4">CKAMP39</shortName>
    </alternativeName>
    <alternativeName>
        <fullName evidence="5">Shisa family member 8</fullName>
    </alternativeName>
</protein>
<keyword id="KW-0325">Glycoprotein</keyword>
<keyword id="KW-0472">Membrane</keyword>
<keyword id="KW-1185">Reference proteome</keyword>
<keyword id="KW-0732">Signal</keyword>
<keyword id="KW-0812">Transmembrane</keyword>
<keyword id="KW-1133">Transmembrane helix</keyword>
<proteinExistence type="evidence at protein level"/>
<accession>J3QNX5</accession>
<reference key="1">
    <citation type="journal article" date="2015" name="Elife">
        <title>Auxiliary subunits of the CKAMP family differentially modulate AMPA receptor properties.</title>
        <authorList>
            <person name="Farrow P."/>
            <person name="Khodosevich K."/>
            <person name="Sapir Y."/>
            <person name="Schulmann A."/>
            <person name="Aslam M."/>
            <person name="Stern-Bach Y."/>
            <person name="Monyer H."/>
            <person name="von Engelhardt J."/>
        </authorList>
    </citation>
    <scope>NUCLEOTIDE SEQUENCE [MRNA]</scope>
    <scope>TISSUE SPECIFICITY</scope>
    <scope>DEVELOPMENTAL STAGE</scope>
    <scope>FUNCTION</scope>
    <scope>INTERACTION WITH GRIA1 AND GRIA2</scope>
    <source>
        <strain>C57BL/6N</strain>
    </source>
</reference>
<reference key="2">
    <citation type="journal article" date="2009" name="PLoS Biol.">
        <title>Lineage-specific biology revealed by a finished genome assembly of the mouse.</title>
        <authorList>
            <person name="Church D.M."/>
            <person name="Goodstadt L."/>
            <person name="Hillier L.W."/>
            <person name="Zody M.C."/>
            <person name="Goldstein S."/>
            <person name="She X."/>
            <person name="Bult C.J."/>
            <person name="Agarwala R."/>
            <person name="Cherry J.L."/>
            <person name="DiCuccio M."/>
            <person name="Hlavina W."/>
            <person name="Kapustin Y."/>
            <person name="Meric P."/>
            <person name="Maglott D."/>
            <person name="Birtle Z."/>
            <person name="Marques A.C."/>
            <person name="Graves T."/>
            <person name="Zhou S."/>
            <person name="Teague B."/>
            <person name="Potamousis K."/>
            <person name="Churas C."/>
            <person name="Place M."/>
            <person name="Herschleb J."/>
            <person name="Runnheim R."/>
            <person name="Forrest D."/>
            <person name="Amos-Landgraf J."/>
            <person name="Schwartz D.C."/>
            <person name="Cheng Z."/>
            <person name="Lindblad-Toh K."/>
            <person name="Eichler E.E."/>
            <person name="Ponting C.P."/>
        </authorList>
    </citation>
    <scope>NUCLEOTIDE SEQUENCE [LARGE SCALE GENOMIC DNA]</scope>
    <source>
        <strain>C57BL/6J</strain>
    </source>
</reference>
<feature type="signal peptide" evidence="1">
    <location>
        <begin position="1"/>
        <end position="36"/>
    </location>
</feature>
<feature type="chain" id="PRO_5011942382" description="Protein shisa-8" evidence="1">
    <location>
        <begin position="37"/>
        <end position="399"/>
    </location>
</feature>
<feature type="topological domain" description="Extracellular" evidence="5">
    <location>
        <begin position="37"/>
        <end position="136"/>
    </location>
</feature>
<feature type="transmembrane region" description="Helical" evidence="1">
    <location>
        <begin position="137"/>
        <end position="157"/>
    </location>
</feature>
<feature type="topological domain" description="Cytoplasmic" evidence="5">
    <location>
        <begin position="158"/>
        <end position="399"/>
    </location>
</feature>
<feature type="region of interest" description="Disordered" evidence="2">
    <location>
        <begin position="207"/>
        <end position="248"/>
    </location>
</feature>
<feature type="region of interest" description="Disordered" evidence="2">
    <location>
        <begin position="378"/>
        <end position="399"/>
    </location>
</feature>
<feature type="compositionally biased region" description="Polar residues" evidence="2">
    <location>
        <begin position="389"/>
        <end position="399"/>
    </location>
</feature>
<feature type="glycosylation site" description="N-linked (GlcNAc...) asparagine" evidence="1">
    <location>
        <position position="73"/>
    </location>
</feature>
<evidence type="ECO:0000255" key="1"/>
<evidence type="ECO:0000256" key="2">
    <source>
        <dbReference type="SAM" id="MobiDB-lite"/>
    </source>
</evidence>
<evidence type="ECO:0000269" key="3">
    <source>
    </source>
</evidence>
<evidence type="ECO:0000303" key="4">
    <source>
    </source>
</evidence>
<evidence type="ECO:0000305" key="5"/>
<evidence type="ECO:0000305" key="6">
    <source>
    </source>
</evidence>
<evidence type="ECO:0000312" key="7">
    <source>
        <dbReference type="MGI" id="MGI:2146080"/>
    </source>
</evidence>
<dbReference type="EMBL" id="KU707903">
    <property type="protein sequence ID" value="AND76926.1"/>
    <property type="molecule type" value="mRNA"/>
</dbReference>
<dbReference type="EMBL" id="AC105358">
    <property type="status" value="NOT_ANNOTATED_CDS"/>
    <property type="molecule type" value="Genomic_DNA"/>
</dbReference>
<dbReference type="CCDS" id="CCDS56994.1"/>
<dbReference type="RefSeq" id="NP_001193950.1">
    <property type="nucleotide sequence ID" value="NM_001207021.2"/>
</dbReference>
<dbReference type="SMR" id="J3QNX5"/>
<dbReference type="FunCoup" id="J3QNX5">
    <property type="interactions" value="5"/>
</dbReference>
<dbReference type="STRING" id="10090.ENSMUSP00000137002"/>
<dbReference type="GlyCosmos" id="J3QNX5">
    <property type="glycosylation" value="1 site, No reported glycans"/>
</dbReference>
<dbReference type="GlyGen" id="J3QNX5">
    <property type="glycosylation" value="1 site"/>
</dbReference>
<dbReference type="iPTMnet" id="J3QNX5"/>
<dbReference type="PhosphoSitePlus" id="J3QNX5"/>
<dbReference type="jPOST" id="J3QNX5"/>
<dbReference type="PaxDb" id="10090-ENSMUSP00000137002"/>
<dbReference type="ProteomicsDB" id="334882"/>
<dbReference type="Antibodypedia" id="71661">
    <property type="antibodies" value="4 antibodies from 4 providers"/>
</dbReference>
<dbReference type="Ensembl" id="ENSMUST00000179269.3">
    <property type="protein sequence ID" value="ENSMUSP00000137002.2"/>
    <property type="gene ID" value="ENSMUSG00000096883.3"/>
</dbReference>
<dbReference type="GeneID" id="435145"/>
<dbReference type="KEGG" id="mmu:435145"/>
<dbReference type="UCSC" id="uc029sua.1">
    <property type="organism name" value="mouse"/>
</dbReference>
<dbReference type="AGR" id="MGI:2146080"/>
<dbReference type="CTD" id="440829"/>
<dbReference type="MGI" id="MGI:2146080">
    <property type="gene designation" value="Shisa8"/>
</dbReference>
<dbReference type="VEuPathDB" id="HostDB:ENSMUSG00000096883"/>
<dbReference type="eggNOG" id="ENOG502R5Y2">
    <property type="taxonomic scope" value="Eukaryota"/>
</dbReference>
<dbReference type="GeneTree" id="ENSGT00940000163233"/>
<dbReference type="HOGENOM" id="CLU_045403_1_0_1"/>
<dbReference type="InParanoid" id="J3QNX5"/>
<dbReference type="OMA" id="NPTRDKT"/>
<dbReference type="OrthoDB" id="9996010at2759"/>
<dbReference type="TreeFam" id="TF330800"/>
<dbReference type="BioGRID-ORCS" id="435145">
    <property type="hits" value="4 hits in 78 CRISPR screens"/>
</dbReference>
<dbReference type="PRO" id="PR:J3QNX5"/>
<dbReference type="Proteomes" id="UP000000589">
    <property type="component" value="Chromosome 15"/>
</dbReference>
<dbReference type="RNAct" id="J3QNX5">
    <property type="molecule type" value="protein"/>
</dbReference>
<dbReference type="Bgee" id="ENSMUSG00000096883">
    <property type="expression patterns" value="Expressed in cerebellar cortex and 26 other cell types or tissues"/>
</dbReference>
<dbReference type="ExpressionAtlas" id="J3QNX5">
    <property type="expression patterns" value="baseline and differential"/>
</dbReference>
<dbReference type="GO" id="GO:0016020">
    <property type="term" value="C:membrane"/>
    <property type="evidence" value="ECO:0007669"/>
    <property type="project" value="UniProtKB-SubCell"/>
</dbReference>
<dbReference type="InterPro" id="IPR026910">
    <property type="entry name" value="Shisa"/>
</dbReference>
<dbReference type="InterPro" id="IPR053891">
    <property type="entry name" value="Shisa_N"/>
</dbReference>
<dbReference type="PANTHER" id="PTHR31774:SF14">
    <property type="entry name" value="PROTEIN SHISA-8"/>
    <property type="match status" value="1"/>
</dbReference>
<dbReference type="PANTHER" id="PTHR31774">
    <property type="entry name" value="PROTEIN SHISA-9-RELATED"/>
    <property type="match status" value="1"/>
</dbReference>
<dbReference type="Pfam" id="PF13908">
    <property type="entry name" value="Shisa_N"/>
    <property type="match status" value="1"/>
</dbReference>
<name>SHSA8_MOUSE</name>
<comment type="function">
    <text evidence="3">May regulate trafficking and current kinetics of AMPA-type glutamate receptor (AMPAR) at synapses.</text>
</comment>
<comment type="subunit">
    <text evidence="6">Interacts with AMPAR subunits GRIA1 and GRIA2.</text>
</comment>
<comment type="subcellular location">
    <subcellularLocation>
        <location evidence="5">Membrane</location>
        <topology evidence="5">Single-pass type I membrane protein</topology>
    </subcellularLocation>
</comment>
<comment type="tissue specificity">
    <text evidence="3">Brain-specific. Highly expressed in cerebellum and olfactory bulb.</text>
</comment>
<comment type="developmental stage">
    <text evidence="3">Undetectable in the brain of 17 dpc embryos. Expressed in olfactory bulb from postnatal day 1 (P1) and then in cerebellum from postnatal day 14 (P14).</text>
</comment>
<comment type="similarity">
    <text evidence="5">Belongs to the shisa family.</text>
</comment>